<organism>
    <name type="scientific">Raoultella terrigena</name>
    <name type="common">Klebsiella terrigena</name>
    <dbReference type="NCBI Taxonomy" id="577"/>
    <lineage>
        <taxon>Bacteria</taxon>
        <taxon>Pseudomonadati</taxon>
        <taxon>Pseudomonadota</taxon>
        <taxon>Gammaproteobacteria</taxon>
        <taxon>Enterobacterales</taxon>
        <taxon>Enterobacteriaceae</taxon>
        <taxon>Klebsiella/Raoultella group</taxon>
        <taxon>Raoultella</taxon>
    </lineage>
</organism>
<gene>
    <name type="primary">gnd</name>
</gene>
<sequence length="445" mass="48834">AVMGRNLALNIESRGYTVSVFNRSREKTEEVIAENPGKKLVPHYTVKEFVESLETPRRILLMVKAGAGTDSAIDSLKPYLDKGDIIIDGGNTFFQDTIRRNRELSADGFNFIGTGVSGGEEGALKGPSIMPGGQKEAYELVAPILEQIAARAEDGEPCVAYIGADGAGHYVKMVHNGIEYGDMQLIAEAYALLKGGLALSNEELATTFTEWNQGELSSYLIDITKDIFTKKDEEGKYLVDVILDEAANKGTGKWTSQSSLDLGEPLSLITESVFARYISSLKDQRVAASKVLTGPQAQPASDKAEFIEKVRRALYLGKIVSYAQGFSQLRAASNEYSWDLNYGEIAKIFRAGCIIRAQFLQKITDAYEENAGIANLLLAPYFKQIADEYQQALRDVVAYAVQNGIPVPTFSAAIAYYDSYRSAVLPANLIQAQRDYFGAHTYKRT</sequence>
<reference key="1">
    <citation type="journal article" date="1994" name="Proc. Natl. Acad. Sci. U.S.A.">
        <title>Intergeneric transfer and recombination of the 6-phosphogluconate dehydrogenase gene (gnd) in enteric bacteria.</title>
        <authorList>
            <person name="Nelson K."/>
            <person name="Selander R.K."/>
        </authorList>
    </citation>
    <scope>NUCLEOTIDE SEQUENCE [GENOMIC DNA]</scope>
    <source>
        <strain>ATCC 33257 / DSM 2687 / JCM 1687 / NBRC 14941 / NCTC 13038 / VTT-E-97854</strain>
    </source>
</reference>
<accession>P41577</accession>
<name>6PGD_RAOTE</name>
<comment type="function">
    <text evidence="1">Catalyzes the oxidative decarboxylation of 6-phosphogluconate to ribulose 5-phosphate and CO(2), with concomitant reduction of NADP to NADPH.</text>
</comment>
<comment type="catalytic activity">
    <reaction>
        <text>6-phospho-D-gluconate + NADP(+) = D-ribulose 5-phosphate + CO2 + NADPH</text>
        <dbReference type="Rhea" id="RHEA:10116"/>
        <dbReference type="ChEBI" id="CHEBI:16526"/>
        <dbReference type="ChEBI" id="CHEBI:57783"/>
        <dbReference type="ChEBI" id="CHEBI:58121"/>
        <dbReference type="ChEBI" id="CHEBI:58349"/>
        <dbReference type="ChEBI" id="CHEBI:58759"/>
        <dbReference type="EC" id="1.1.1.44"/>
    </reaction>
</comment>
<comment type="pathway">
    <text>Carbohydrate degradation; pentose phosphate pathway; D-ribulose 5-phosphate from D-glucose 6-phosphate (oxidative stage): step 3/3.</text>
</comment>
<comment type="subunit">
    <text evidence="1">Homodimer.</text>
</comment>
<comment type="similarity">
    <text evidence="2">Belongs to the 6-phosphogluconate dehydrogenase family.</text>
</comment>
<evidence type="ECO:0000250" key="1"/>
<evidence type="ECO:0000305" key="2"/>
<protein>
    <recommendedName>
        <fullName>6-phosphogluconate dehydrogenase, decarboxylating</fullName>
        <ecNumber>1.1.1.44</ecNumber>
    </recommendedName>
</protein>
<feature type="chain" id="PRO_0000090044" description="6-phosphogluconate dehydrogenase, decarboxylating">
    <location>
        <begin position="1" status="less than"/>
        <end position="445" status="greater than"/>
    </location>
</feature>
<feature type="active site" description="Proton acceptor" evidence="1">
    <location>
        <position position="172"/>
    </location>
</feature>
<feature type="active site" description="Proton donor" evidence="1">
    <location>
        <position position="179"/>
    </location>
</feature>
<feature type="binding site" evidence="1">
    <location>
        <begin position="1"/>
        <end position="4"/>
    </location>
    <ligand>
        <name>NADP(+)</name>
        <dbReference type="ChEBI" id="CHEBI:58349"/>
    </ligand>
</feature>
<feature type="binding site" evidence="1">
    <location>
        <begin position="22"/>
        <end position="24"/>
    </location>
    <ligand>
        <name>NADP(+)</name>
        <dbReference type="ChEBI" id="CHEBI:58349"/>
    </ligand>
</feature>
<feature type="binding site" evidence="1">
    <location>
        <begin position="63"/>
        <end position="65"/>
    </location>
    <ligand>
        <name>NADP(+)</name>
        <dbReference type="ChEBI" id="CHEBI:58349"/>
    </ligand>
</feature>
<feature type="binding site" evidence="1">
    <location>
        <position position="91"/>
    </location>
    <ligand>
        <name>NADP(+)</name>
        <dbReference type="ChEBI" id="CHEBI:58349"/>
    </ligand>
</feature>
<feature type="binding site" description="in other chain" evidence="1">
    <location>
        <position position="91"/>
    </location>
    <ligand>
        <name>substrate</name>
        <note>ligand shared between dimeric partners</note>
    </ligand>
</feature>
<feature type="binding site" description="in other chain" evidence="1">
    <location>
        <begin position="117"/>
        <end position="119"/>
    </location>
    <ligand>
        <name>substrate</name>
        <note>ligand shared between dimeric partners</note>
    </ligand>
</feature>
<feature type="binding site" description="in other chain" evidence="1">
    <location>
        <begin position="175"/>
        <end position="176"/>
    </location>
    <ligand>
        <name>substrate</name>
        <note>ligand shared between dimeric partners</note>
    </ligand>
</feature>
<feature type="binding site" description="in other chain" evidence="1">
    <location>
        <position position="180"/>
    </location>
    <ligand>
        <name>substrate</name>
        <note>ligand shared between dimeric partners</note>
    </ligand>
</feature>
<feature type="binding site" description="in other chain" evidence="1">
    <location>
        <position position="249"/>
    </location>
    <ligand>
        <name>substrate</name>
        <note>ligand shared between dimeric partners</note>
    </ligand>
</feature>
<feature type="binding site" description="in other chain" evidence="1">
    <location>
        <position position="276"/>
    </location>
    <ligand>
        <name>substrate</name>
        <note>ligand shared between dimeric partners</note>
    </ligand>
</feature>
<feature type="binding site" evidence="1">
    <location>
        <position position="434"/>
    </location>
    <ligand>
        <name>substrate</name>
        <note>ligand shared between dimeric partners</note>
    </ligand>
</feature>
<feature type="binding site" evidence="1">
    <location>
        <position position="440"/>
    </location>
    <ligand>
        <name>substrate</name>
        <note>ligand shared between dimeric partners</note>
    </ligand>
</feature>
<feature type="non-terminal residue">
    <location>
        <position position="1"/>
    </location>
</feature>
<feature type="non-terminal residue">
    <location>
        <position position="445"/>
    </location>
</feature>
<dbReference type="EC" id="1.1.1.44"/>
<dbReference type="EMBL" id="U14473">
    <property type="protein sequence ID" value="AAC43819.1"/>
    <property type="molecule type" value="Genomic_DNA"/>
</dbReference>
<dbReference type="SMR" id="P41577"/>
<dbReference type="UniPathway" id="UPA00115">
    <property type="reaction ID" value="UER00410"/>
</dbReference>
<dbReference type="GO" id="GO:0050661">
    <property type="term" value="F:NADP binding"/>
    <property type="evidence" value="ECO:0007669"/>
    <property type="project" value="InterPro"/>
</dbReference>
<dbReference type="GO" id="GO:0004616">
    <property type="term" value="F:phosphogluconate dehydrogenase (decarboxylating) activity"/>
    <property type="evidence" value="ECO:0000250"/>
    <property type="project" value="UniProtKB"/>
</dbReference>
<dbReference type="GO" id="GO:0019521">
    <property type="term" value="P:D-gluconate metabolic process"/>
    <property type="evidence" value="ECO:0007669"/>
    <property type="project" value="UniProtKB-KW"/>
</dbReference>
<dbReference type="GO" id="GO:0016054">
    <property type="term" value="P:organic acid catabolic process"/>
    <property type="evidence" value="ECO:0007669"/>
    <property type="project" value="UniProtKB-ARBA"/>
</dbReference>
<dbReference type="GO" id="GO:0006098">
    <property type="term" value="P:pentose-phosphate shunt"/>
    <property type="evidence" value="ECO:0000250"/>
    <property type="project" value="UniProtKB"/>
</dbReference>
<dbReference type="FunFam" id="1.10.1040.10:FF:000002">
    <property type="entry name" value="6-phosphogluconate dehydrogenase, decarboxylating"/>
    <property type="match status" value="1"/>
</dbReference>
<dbReference type="FunFam" id="3.40.50.720:FF:000007">
    <property type="entry name" value="6-phosphogluconate dehydrogenase, decarboxylating"/>
    <property type="match status" value="1"/>
</dbReference>
<dbReference type="Gene3D" id="1.20.5.320">
    <property type="entry name" value="6-Phosphogluconate Dehydrogenase, domain 3"/>
    <property type="match status" value="1"/>
</dbReference>
<dbReference type="Gene3D" id="1.10.1040.10">
    <property type="entry name" value="N-(1-d-carboxylethyl)-l-norvaline Dehydrogenase, domain 2"/>
    <property type="match status" value="1"/>
</dbReference>
<dbReference type="Gene3D" id="3.40.50.720">
    <property type="entry name" value="NAD(P)-binding Rossmann-like Domain"/>
    <property type="match status" value="1"/>
</dbReference>
<dbReference type="InterPro" id="IPR008927">
    <property type="entry name" value="6-PGluconate_DH-like_C_sf"/>
</dbReference>
<dbReference type="InterPro" id="IPR013328">
    <property type="entry name" value="6PGD_dom2"/>
</dbReference>
<dbReference type="InterPro" id="IPR006114">
    <property type="entry name" value="6PGDH_C"/>
</dbReference>
<dbReference type="InterPro" id="IPR006113">
    <property type="entry name" value="6PGDH_Gnd/GntZ"/>
</dbReference>
<dbReference type="InterPro" id="IPR006115">
    <property type="entry name" value="6PGDH_NADP-bd"/>
</dbReference>
<dbReference type="InterPro" id="IPR006184">
    <property type="entry name" value="6PGdom_BS"/>
</dbReference>
<dbReference type="InterPro" id="IPR036291">
    <property type="entry name" value="NAD(P)-bd_dom_sf"/>
</dbReference>
<dbReference type="InterPro" id="IPR006183">
    <property type="entry name" value="Pgluconate_DH"/>
</dbReference>
<dbReference type="NCBIfam" id="TIGR00873">
    <property type="entry name" value="gnd"/>
    <property type="match status" value="1"/>
</dbReference>
<dbReference type="NCBIfam" id="NF006765">
    <property type="entry name" value="PRK09287.1"/>
    <property type="match status" value="1"/>
</dbReference>
<dbReference type="PANTHER" id="PTHR11811">
    <property type="entry name" value="6-PHOSPHOGLUCONATE DEHYDROGENASE"/>
    <property type="match status" value="1"/>
</dbReference>
<dbReference type="Pfam" id="PF00393">
    <property type="entry name" value="6PGD"/>
    <property type="match status" value="1"/>
</dbReference>
<dbReference type="Pfam" id="PF03446">
    <property type="entry name" value="NAD_binding_2"/>
    <property type="match status" value="1"/>
</dbReference>
<dbReference type="PIRSF" id="PIRSF000109">
    <property type="entry name" value="6PGD"/>
    <property type="match status" value="1"/>
</dbReference>
<dbReference type="PRINTS" id="PR00076">
    <property type="entry name" value="6PGDHDRGNASE"/>
</dbReference>
<dbReference type="SMART" id="SM01350">
    <property type="entry name" value="6PGD"/>
    <property type="match status" value="1"/>
</dbReference>
<dbReference type="SUPFAM" id="SSF48179">
    <property type="entry name" value="6-phosphogluconate dehydrogenase C-terminal domain-like"/>
    <property type="match status" value="1"/>
</dbReference>
<dbReference type="SUPFAM" id="SSF51735">
    <property type="entry name" value="NAD(P)-binding Rossmann-fold domains"/>
    <property type="match status" value="1"/>
</dbReference>
<dbReference type="PROSITE" id="PS00461">
    <property type="entry name" value="6PGD"/>
    <property type="match status" value="1"/>
</dbReference>
<keyword id="KW-0311">Gluconate utilization</keyword>
<keyword id="KW-0521">NADP</keyword>
<keyword id="KW-0560">Oxidoreductase</keyword>
<keyword id="KW-0570">Pentose shunt</keyword>
<proteinExistence type="inferred from homology"/>